<sequence length="58" mass="6972">MSKTVVRKNESLEDALRRFKRSVSKSGTIQEVRKREFYEKPSVKRKKKSEAARKRKFK</sequence>
<dbReference type="EMBL" id="AP009351">
    <property type="protein sequence ID" value="BAF67750.1"/>
    <property type="molecule type" value="Genomic_DNA"/>
</dbReference>
<dbReference type="RefSeq" id="WP_000048060.1">
    <property type="nucleotide sequence ID" value="NZ_JBBIAE010000001.1"/>
</dbReference>
<dbReference type="SMR" id="A6QHB8"/>
<dbReference type="GeneID" id="98345946"/>
<dbReference type="KEGG" id="sae:NWMN_1478"/>
<dbReference type="HOGENOM" id="CLU_159258_3_2_9"/>
<dbReference type="Proteomes" id="UP000006386">
    <property type="component" value="Chromosome"/>
</dbReference>
<dbReference type="GO" id="GO:1990904">
    <property type="term" value="C:ribonucleoprotein complex"/>
    <property type="evidence" value="ECO:0007669"/>
    <property type="project" value="UniProtKB-KW"/>
</dbReference>
<dbReference type="GO" id="GO:0005840">
    <property type="term" value="C:ribosome"/>
    <property type="evidence" value="ECO:0007669"/>
    <property type="project" value="UniProtKB-KW"/>
</dbReference>
<dbReference type="GO" id="GO:0003735">
    <property type="term" value="F:structural constituent of ribosome"/>
    <property type="evidence" value="ECO:0007669"/>
    <property type="project" value="InterPro"/>
</dbReference>
<dbReference type="GO" id="GO:0006412">
    <property type="term" value="P:translation"/>
    <property type="evidence" value="ECO:0007669"/>
    <property type="project" value="UniProtKB-UniRule"/>
</dbReference>
<dbReference type="Gene3D" id="1.20.5.1150">
    <property type="entry name" value="Ribosomal protein S8"/>
    <property type="match status" value="1"/>
</dbReference>
<dbReference type="HAMAP" id="MF_00358">
    <property type="entry name" value="Ribosomal_bS21"/>
    <property type="match status" value="1"/>
</dbReference>
<dbReference type="InterPro" id="IPR001911">
    <property type="entry name" value="Ribosomal_bS21"/>
</dbReference>
<dbReference type="InterPro" id="IPR018278">
    <property type="entry name" value="Ribosomal_bS21_CS"/>
</dbReference>
<dbReference type="InterPro" id="IPR038380">
    <property type="entry name" value="Ribosomal_bS21_sf"/>
</dbReference>
<dbReference type="NCBIfam" id="TIGR00030">
    <property type="entry name" value="S21p"/>
    <property type="match status" value="1"/>
</dbReference>
<dbReference type="PANTHER" id="PTHR21109">
    <property type="entry name" value="MITOCHONDRIAL 28S RIBOSOMAL PROTEIN S21"/>
    <property type="match status" value="1"/>
</dbReference>
<dbReference type="PANTHER" id="PTHR21109:SF22">
    <property type="entry name" value="SMALL RIBOSOMAL SUBUNIT PROTEIN BS21"/>
    <property type="match status" value="1"/>
</dbReference>
<dbReference type="Pfam" id="PF01165">
    <property type="entry name" value="Ribosomal_S21"/>
    <property type="match status" value="1"/>
</dbReference>
<dbReference type="PRINTS" id="PR00976">
    <property type="entry name" value="RIBOSOMALS21"/>
</dbReference>
<dbReference type="PROSITE" id="PS01181">
    <property type="entry name" value="RIBOSOMAL_S21"/>
    <property type="match status" value="1"/>
</dbReference>
<comment type="similarity">
    <text evidence="1">Belongs to the bacterial ribosomal protein bS21 family.</text>
</comment>
<name>RS21_STAAE</name>
<feature type="chain" id="PRO_1000072081" description="Small ribosomal subunit protein bS21">
    <location>
        <begin position="1"/>
        <end position="58"/>
    </location>
</feature>
<proteinExistence type="inferred from homology"/>
<protein>
    <recommendedName>
        <fullName evidence="1">Small ribosomal subunit protein bS21</fullName>
    </recommendedName>
    <alternativeName>
        <fullName evidence="2">30S ribosomal protein S21</fullName>
    </alternativeName>
</protein>
<gene>
    <name evidence="1" type="primary">rpsU</name>
    <name type="ordered locus">NWMN_1478</name>
</gene>
<organism>
    <name type="scientific">Staphylococcus aureus (strain Newman)</name>
    <dbReference type="NCBI Taxonomy" id="426430"/>
    <lineage>
        <taxon>Bacteria</taxon>
        <taxon>Bacillati</taxon>
        <taxon>Bacillota</taxon>
        <taxon>Bacilli</taxon>
        <taxon>Bacillales</taxon>
        <taxon>Staphylococcaceae</taxon>
        <taxon>Staphylococcus</taxon>
    </lineage>
</organism>
<accession>A6QHB8</accession>
<evidence type="ECO:0000255" key="1">
    <source>
        <dbReference type="HAMAP-Rule" id="MF_00358"/>
    </source>
</evidence>
<evidence type="ECO:0000305" key="2"/>
<reference key="1">
    <citation type="journal article" date="2008" name="J. Bacteriol.">
        <title>Genome sequence of Staphylococcus aureus strain Newman and comparative analysis of staphylococcal genomes: polymorphism and evolution of two major pathogenicity islands.</title>
        <authorList>
            <person name="Baba T."/>
            <person name="Bae T."/>
            <person name="Schneewind O."/>
            <person name="Takeuchi F."/>
            <person name="Hiramatsu K."/>
        </authorList>
    </citation>
    <scope>NUCLEOTIDE SEQUENCE [LARGE SCALE GENOMIC DNA]</scope>
    <source>
        <strain>Newman</strain>
    </source>
</reference>
<keyword id="KW-0687">Ribonucleoprotein</keyword>
<keyword id="KW-0689">Ribosomal protein</keyword>